<gene>
    <name evidence="1" type="primary">hisI</name>
    <name type="ordered locus">Rfer_2952</name>
</gene>
<protein>
    <recommendedName>
        <fullName evidence="1">Phosphoribosyl-AMP cyclohydrolase</fullName>
        <shortName evidence="1">PRA-CH</shortName>
        <ecNumber evidence="1">3.5.4.19</ecNumber>
    </recommendedName>
</protein>
<dbReference type="EC" id="3.5.4.19" evidence="1"/>
<dbReference type="EMBL" id="CP000267">
    <property type="protein sequence ID" value="ABD70663.1"/>
    <property type="molecule type" value="Genomic_DNA"/>
</dbReference>
<dbReference type="RefSeq" id="WP_011465229.1">
    <property type="nucleotide sequence ID" value="NC_007908.1"/>
</dbReference>
<dbReference type="SMR" id="Q21U90"/>
<dbReference type="STRING" id="338969.Rfer_2952"/>
<dbReference type="KEGG" id="rfr:Rfer_2952"/>
<dbReference type="eggNOG" id="COG0139">
    <property type="taxonomic scope" value="Bacteria"/>
</dbReference>
<dbReference type="HOGENOM" id="CLU_048577_5_0_4"/>
<dbReference type="OrthoDB" id="9795769at2"/>
<dbReference type="UniPathway" id="UPA00031">
    <property type="reaction ID" value="UER00008"/>
</dbReference>
<dbReference type="Proteomes" id="UP000008332">
    <property type="component" value="Chromosome"/>
</dbReference>
<dbReference type="GO" id="GO:0005737">
    <property type="term" value="C:cytoplasm"/>
    <property type="evidence" value="ECO:0007669"/>
    <property type="project" value="UniProtKB-SubCell"/>
</dbReference>
<dbReference type="GO" id="GO:0000287">
    <property type="term" value="F:magnesium ion binding"/>
    <property type="evidence" value="ECO:0007669"/>
    <property type="project" value="UniProtKB-UniRule"/>
</dbReference>
<dbReference type="GO" id="GO:0004635">
    <property type="term" value="F:phosphoribosyl-AMP cyclohydrolase activity"/>
    <property type="evidence" value="ECO:0007669"/>
    <property type="project" value="UniProtKB-UniRule"/>
</dbReference>
<dbReference type="GO" id="GO:0008270">
    <property type="term" value="F:zinc ion binding"/>
    <property type="evidence" value="ECO:0007669"/>
    <property type="project" value="UniProtKB-UniRule"/>
</dbReference>
<dbReference type="GO" id="GO:0000105">
    <property type="term" value="P:L-histidine biosynthetic process"/>
    <property type="evidence" value="ECO:0007669"/>
    <property type="project" value="UniProtKB-UniRule"/>
</dbReference>
<dbReference type="FunFam" id="3.10.20.810:FF:000001">
    <property type="entry name" value="Histidine biosynthesis bifunctional protein HisIE"/>
    <property type="match status" value="1"/>
</dbReference>
<dbReference type="Gene3D" id="3.10.20.810">
    <property type="entry name" value="Phosphoribosyl-AMP cyclohydrolase"/>
    <property type="match status" value="1"/>
</dbReference>
<dbReference type="HAMAP" id="MF_01021">
    <property type="entry name" value="HisI"/>
    <property type="match status" value="1"/>
</dbReference>
<dbReference type="InterPro" id="IPR026660">
    <property type="entry name" value="PRA-CH"/>
</dbReference>
<dbReference type="InterPro" id="IPR002496">
    <property type="entry name" value="PRib_AMP_CycHydrolase_dom"/>
</dbReference>
<dbReference type="InterPro" id="IPR038019">
    <property type="entry name" value="PRib_AMP_CycHydrolase_sf"/>
</dbReference>
<dbReference type="NCBIfam" id="NF000768">
    <property type="entry name" value="PRK00051.1"/>
    <property type="match status" value="1"/>
</dbReference>
<dbReference type="PANTHER" id="PTHR42945">
    <property type="entry name" value="HISTIDINE BIOSYNTHESIS BIFUNCTIONAL PROTEIN"/>
    <property type="match status" value="1"/>
</dbReference>
<dbReference type="PANTHER" id="PTHR42945:SF1">
    <property type="entry name" value="HISTIDINE BIOSYNTHESIS BIFUNCTIONAL PROTEIN HIS7"/>
    <property type="match status" value="1"/>
</dbReference>
<dbReference type="Pfam" id="PF01502">
    <property type="entry name" value="PRA-CH"/>
    <property type="match status" value="1"/>
</dbReference>
<dbReference type="SUPFAM" id="SSF141734">
    <property type="entry name" value="HisI-like"/>
    <property type="match status" value="1"/>
</dbReference>
<sequence>MNWLDELKWDSQGLMPAIAQEQGSNDVLMLAWMNREALQKTAELGRAVYFSRSRNKLWFKGEESGHVQIVHEIRIDCDQDVILLKVTQTGHTPGIACHTGRHSCFYRVYENGEWKVTDPVLKDPQTIYK</sequence>
<keyword id="KW-0028">Amino-acid biosynthesis</keyword>
<keyword id="KW-0963">Cytoplasm</keyword>
<keyword id="KW-0368">Histidine biosynthesis</keyword>
<keyword id="KW-0378">Hydrolase</keyword>
<keyword id="KW-0460">Magnesium</keyword>
<keyword id="KW-0479">Metal-binding</keyword>
<keyword id="KW-1185">Reference proteome</keyword>
<keyword id="KW-0862">Zinc</keyword>
<reference key="1">
    <citation type="submission" date="2006-02" db="EMBL/GenBank/DDBJ databases">
        <title>Complete sequence of chromosome of Rhodoferax ferrireducens DSM 15236.</title>
        <authorList>
            <person name="Copeland A."/>
            <person name="Lucas S."/>
            <person name="Lapidus A."/>
            <person name="Barry K."/>
            <person name="Detter J.C."/>
            <person name="Glavina del Rio T."/>
            <person name="Hammon N."/>
            <person name="Israni S."/>
            <person name="Pitluck S."/>
            <person name="Brettin T."/>
            <person name="Bruce D."/>
            <person name="Han C."/>
            <person name="Tapia R."/>
            <person name="Gilna P."/>
            <person name="Kiss H."/>
            <person name="Schmutz J."/>
            <person name="Larimer F."/>
            <person name="Land M."/>
            <person name="Kyrpides N."/>
            <person name="Ivanova N."/>
            <person name="Richardson P."/>
        </authorList>
    </citation>
    <scope>NUCLEOTIDE SEQUENCE [LARGE SCALE GENOMIC DNA]</scope>
    <source>
        <strain>ATCC BAA-621 / DSM 15236 / T118</strain>
    </source>
</reference>
<comment type="function">
    <text evidence="1">Catalyzes the hydrolysis of the adenine ring of phosphoribosyl-AMP.</text>
</comment>
<comment type="catalytic activity">
    <reaction evidence="1">
        <text>1-(5-phospho-beta-D-ribosyl)-5'-AMP + H2O = 1-(5-phospho-beta-D-ribosyl)-5-[(5-phospho-beta-D-ribosylamino)methylideneamino]imidazole-4-carboxamide</text>
        <dbReference type="Rhea" id="RHEA:20049"/>
        <dbReference type="ChEBI" id="CHEBI:15377"/>
        <dbReference type="ChEBI" id="CHEBI:58435"/>
        <dbReference type="ChEBI" id="CHEBI:59457"/>
        <dbReference type="EC" id="3.5.4.19"/>
    </reaction>
</comment>
<comment type="cofactor">
    <cofactor evidence="1">
        <name>Mg(2+)</name>
        <dbReference type="ChEBI" id="CHEBI:18420"/>
    </cofactor>
    <text evidence="1">Binds 1 Mg(2+) ion per subunit.</text>
</comment>
<comment type="cofactor">
    <cofactor evidence="1">
        <name>Zn(2+)</name>
        <dbReference type="ChEBI" id="CHEBI:29105"/>
    </cofactor>
    <text evidence="1">Binds 1 zinc ion per subunit.</text>
</comment>
<comment type="pathway">
    <text evidence="1">Amino-acid biosynthesis; L-histidine biosynthesis; L-histidine from 5-phospho-alpha-D-ribose 1-diphosphate: step 3/9.</text>
</comment>
<comment type="subunit">
    <text evidence="1">Homodimer.</text>
</comment>
<comment type="subcellular location">
    <subcellularLocation>
        <location evidence="1">Cytoplasm</location>
    </subcellularLocation>
</comment>
<comment type="similarity">
    <text evidence="1">Belongs to the PRA-CH family.</text>
</comment>
<feature type="chain" id="PRO_0000319709" description="Phosphoribosyl-AMP cyclohydrolase">
    <location>
        <begin position="1"/>
        <end position="129"/>
    </location>
</feature>
<feature type="binding site" evidence="1">
    <location>
        <position position="76"/>
    </location>
    <ligand>
        <name>Mg(2+)</name>
        <dbReference type="ChEBI" id="CHEBI:18420"/>
    </ligand>
</feature>
<feature type="binding site" evidence="1">
    <location>
        <position position="77"/>
    </location>
    <ligand>
        <name>Zn(2+)</name>
        <dbReference type="ChEBI" id="CHEBI:29105"/>
        <note>ligand shared between dimeric partners</note>
    </ligand>
</feature>
<feature type="binding site" evidence="1">
    <location>
        <position position="78"/>
    </location>
    <ligand>
        <name>Mg(2+)</name>
        <dbReference type="ChEBI" id="CHEBI:18420"/>
    </ligand>
</feature>
<feature type="binding site" evidence="1">
    <location>
        <position position="80"/>
    </location>
    <ligand>
        <name>Mg(2+)</name>
        <dbReference type="ChEBI" id="CHEBI:18420"/>
    </ligand>
</feature>
<feature type="binding site" evidence="1">
    <location>
        <position position="97"/>
    </location>
    <ligand>
        <name>Zn(2+)</name>
        <dbReference type="ChEBI" id="CHEBI:29105"/>
        <note>ligand shared between dimeric partners</note>
    </ligand>
</feature>
<feature type="binding site" evidence="1">
    <location>
        <position position="104"/>
    </location>
    <ligand>
        <name>Zn(2+)</name>
        <dbReference type="ChEBI" id="CHEBI:29105"/>
        <note>ligand shared between dimeric partners</note>
    </ligand>
</feature>
<evidence type="ECO:0000255" key="1">
    <source>
        <dbReference type="HAMAP-Rule" id="MF_01021"/>
    </source>
</evidence>
<accession>Q21U90</accession>
<proteinExistence type="inferred from homology"/>
<name>HIS3_ALBFT</name>
<organism>
    <name type="scientific">Albidiferax ferrireducens (strain ATCC BAA-621 / DSM 15236 / T118)</name>
    <name type="common">Rhodoferax ferrireducens</name>
    <dbReference type="NCBI Taxonomy" id="338969"/>
    <lineage>
        <taxon>Bacteria</taxon>
        <taxon>Pseudomonadati</taxon>
        <taxon>Pseudomonadota</taxon>
        <taxon>Betaproteobacteria</taxon>
        <taxon>Burkholderiales</taxon>
        <taxon>Comamonadaceae</taxon>
        <taxon>Rhodoferax</taxon>
    </lineage>
</organism>